<reference key="1">
    <citation type="journal article" date="2001" name="Genomics">
        <title>From PREDs and open reading frames to cDNA isolation: revisiting the human chromosome 21 transcription map.</title>
        <authorList>
            <person name="Reymond A."/>
            <person name="Friedli M."/>
            <person name="Neergaard Henrichsen C."/>
            <person name="Chapot F."/>
            <person name="Deutsch S."/>
            <person name="Ucla C."/>
            <person name="Rossier C."/>
            <person name="Lyle R."/>
            <person name="Guipponi M."/>
            <person name="Antonarakis S.E."/>
        </authorList>
    </citation>
    <scope>NUCLEOTIDE SEQUENCE [MRNA]</scope>
</reference>
<name>M3KCL_MOUSE</name>
<proteinExistence type="evidence at transcript level"/>
<sequence length="142" mass="16271">MISTARVPADKPVRIAFSLNDAPDDTPSEDAIPLVFPELEQQLQPLPPCHDSVESMQVFKQHCQIAEEYHEVKKEIALLEERKKELIAKLDQAEKEKLDAAQLVQEFEALTEENRTLKMAQSQCVEQLENLRIQYQKRQGSS</sequence>
<protein>
    <recommendedName>
        <fullName>MAP3K7 C-terminal-like protein</fullName>
    </recommendedName>
    <alternativeName>
        <fullName>TAK1-like protein</fullName>
    </alternativeName>
</protein>
<organism>
    <name type="scientific">Mus musculus</name>
    <name type="common">Mouse</name>
    <dbReference type="NCBI Taxonomy" id="10090"/>
    <lineage>
        <taxon>Eukaryota</taxon>
        <taxon>Metazoa</taxon>
        <taxon>Chordata</taxon>
        <taxon>Craniata</taxon>
        <taxon>Vertebrata</taxon>
        <taxon>Euteleostomi</taxon>
        <taxon>Mammalia</taxon>
        <taxon>Eutheria</taxon>
        <taxon>Euarchontoglires</taxon>
        <taxon>Glires</taxon>
        <taxon>Rodentia</taxon>
        <taxon>Myomorpha</taxon>
        <taxon>Muroidea</taxon>
        <taxon>Muridae</taxon>
        <taxon>Murinae</taxon>
        <taxon>Mus</taxon>
        <taxon>Mus</taxon>
    </lineage>
</organism>
<keyword id="KW-1185">Reference proteome</keyword>
<feature type="chain" id="PRO_0000072424" description="MAP3K7 C-terminal-like protein">
    <location>
        <begin position="1"/>
        <end position="142"/>
    </location>
</feature>
<dbReference type="EMBL" id="AY033899">
    <property type="protein sequence ID" value="AAK68717.1"/>
    <property type="molecule type" value="mRNA"/>
</dbReference>
<dbReference type="CCDS" id="CCDS28292.1"/>
<dbReference type="RefSeq" id="NP_001404007.1">
    <property type="nucleotide sequence ID" value="NM_001417078.1"/>
</dbReference>
<dbReference type="RefSeq" id="NP_659103.1">
    <property type="nucleotide sequence ID" value="NM_144854.3"/>
</dbReference>
<dbReference type="RefSeq" id="XP_006523069.1">
    <property type="nucleotide sequence ID" value="XM_006523006.1"/>
</dbReference>
<dbReference type="SMR" id="P58500"/>
<dbReference type="FunCoup" id="P58500">
    <property type="interactions" value="1"/>
</dbReference>
<dbReference type="STRING" id="10090.ENSMUSP00000026700"/>
<dbReference type="PaxDb" id="10090-ENSMUSP00000026700"/>
<dbReference type="ProteomicsDB" id="295752"/>
<dbReference type="DNASU" id="224419"/>
<dbReference type="Ensembl" id="ENSMUST00000026700.8">
    <property type="protein sequence ID" value="ENSMUSP00000026700.8"/>
    <property type="gene ID" value="ENSMUSG00000025610.8"/>
</dbReference>
<dbReference type="GeneID" id="224419"/>
<dbReference type="KEGG" id="mmu:224419"/>
<dbReference type="UCSC" id="uc012ahq.1">
    <property type="organism name" value="mouse"/>
</dbReference>
<dbReference type="AGR" id="MGI:2446584"/>
<dbReference type="CTD" id="56911"/>
<dbReference type="MGI" id="MGI:2446584">
    <property type="gene designation" value="Map3k7cl"/>
</dbReference>
<dbReference type="VEuPathDB" id="HostDB:ENSMUSG00000025610"/>
<dbReference type="eggNOG" id="ENOG502S2UX">
    <property type="taxonomic scope" value="Eukaryota"/>
</dbReference>
<dbReference type="GeneTree" id="ENSGT00940000164659"/>
<dbReference type="HOGENOM" id="CLU_100451_1_0_1"/>
<dbReference type="InParanoid" id="P58500"/>
<dbReference type="OMA" id="MAREFHH"/>
<dbReference type="OrthoDB" id="8866809at2759"/>
<dbReference type="PhylomeDB" id="P58500"/>
<dbReference type="TreeFam" id="TF335499"/>
<dbReference type="BioGRID-ORCS" id="224419">
    <property type="hits" value="2 hits in 76 CRISPR screens"/>
</dbReference>
<dbReference type="ChiTaRS" id="Map3k7cl">
    <property type="organism name" value="mouse"/>
</dbReference>
<dbReference type="PRO" id="PR:P58500"/>
<dbReference type="Proteomes" id="UP000000589">
    <property type="component" value="Chromosome 16"/>
</dbReference>
<dbReference type="RNAct" id="P58500">
    <property type="molecule type" value="protein"/>
</dbReference>
<dbReference type="Bgee" id="ENSMUSG00000025610">
    <property type="expression patterns" value="Expressed in animal zygote and 57 other cell types or tissues"/>
</dbReference>
<dbReference type="ExpressionAtlas" id="P58500">
    <property type="expression patterns" value="baseline and differential"/>
</dbReference>
<dbReference type="InterPro" id="IPR042800">
    <property type="entry name" value="Map3k7cl"/>
</dbReference>
<dbReference type="PANTHER" id="PTHR47140">
    <property type="entry name" value="MAP3K7 C-TERMINAL-LIKE PROTEIN"/>
    <property type="match status" value="1"/>
</dbReference>
<dbReference type="PANTHER" id="PTHR47140:SF1">
    <property type="entry name" value="MAP3K7 C-TERMINAL-LIKE PROTEIN"/>
    <property type="match status" value="1"/>
</dbReference>
<accession>P58500</accession>
<gene>
    <name type="primary">Map3k7cl</name>
    <name type="synonym">ORF63</name>
    <name type="synonym">Tak1l</name>
</gene>
<comment type="tissue specificity">
    <text>Ubiquitous.</text>
</comment>
<comment type="domain">
    <text>Contains a C-terminal domain similar to that of the C-terminal section of MAP3K7.</text>
</comment>